<proteinExistence type="inferred from homology"/>
<organism>
    <name type="scientific">Geobacillus kaustophilus (strain HTA426)</name>
    <dbReference type="NCBI Taxonomy" id="235909"/>
    <lineage>
        <taxon>Bacteria</taxon>
        <taxon>Bacillati</taxon>
        <taxon>Bacillota</taxon>
        <taxon>Bacilli</taxon>
        <taxon>Bacillales</taxon>
        <taxon>Anoxybacillaceae</taxon>
        <taxon>Geobacillus</taxon>
        <taxon>Geobacillus thermoleovorans group</taxon>
    </lineage>
</organism>
<comment type="function">
    <text evidence="1">Part of the phosphoribosylformylglycinamidine synthase complex involved in the purines biosynthetic pathway. Catalyzes the ATP-dependent conversion of formylglycinamide ribonucleotide (FGAR) and glutamine to yield formylglycinamidine ribonucleotide (FGAM) and glutamate. The FGAM synthase complex is composed of three subunits. PurQ produces an ammonia molecule by converting glutamine to glutamate. PurL transfers the ammonia molecule to FGAR to form FGAM in an ATP-dependent manner. PurS interacts with PurQ and PurL and is thought to assist in the transfer of the ammonia molecule from PurQ to PurL.</text>
</comment>
<comment type="catalytic activity">
    <reaction evidence="1">
        <text>N(2)-formyl-N(1)-(5-phospho-beta-D-ribosyl)glycinamide + L-glutamine + ATP + H2O = 2-formamido-N(1)-(5-O-phospho-beta-D-ribosyl)acetamidine + L-glutamate + ADP + phosphate + H(+)</text>
        <dbReference type="Rhea" id="RHEA:17129"/>
        <dbReference type="ChEBI" id="CHEBI:15377"/>
        <dbReference type="ChEBI" id="CHEBI:15378"/>
        <dbReference type="ChEBI" id="CHEBI:29985"/>
        <dbReference type="ChEBI" id="CHEBI:30616"/>
        <dbReference type="ChEBI" id="CHEBI:43474"/>
        <dbReference type="ChEBI" id="CHEBI:58359"/>
        <dbReference type="ChEBI" id="CHEBI:147286"/>
        <dbReference type="ChEBI" id="CHEBI:147287"/>
        <dbReference type="ChEBI" id="CHEBI:456216"/>
        <dbReference type="EC" id="6.3.5.3"/>
    </reaction>
</comment>
<comment type="pathway">
    <text evidence="1">Purine metabolism; IMP biosynthesis via de novo pathway; 5-amino-1-(5-phospho-D-ribosyl)imidazole from N(2)-formyl-N(1)-(5-phospho-D-ribosyl)glycinamide: step 1/2.</text>
</comment>
<comment type="subunit">
    <text evidence="1">Monomer. Part of the FGAM synthase complex composed of 1 PurL, 1 PurQ and 2 PurS subunits.</text>
</comment>
<comment type="subcellular location">
    <subcellularLocation>
        <location evidence="1">Cytoplasm</location>
    </subcellularLocation>
</comment>
<comment type="similarity">
    <text evidence="1">Belongs to the FGAMS family.</text>
</comment>
<protein>
    <recommendedName>
        <fullName evidence="1">Phosphoribosylformylglycinamidine synthase subunit PurL</fullName>
        <shortName evidence="1">FGAM synthase</shortName>
        <ecNumber evidence="1">6.3.5.3</ecNumber>
    </recommendedName>
    <alternativeName>
        <fullName evidence="1">Formylglycinamide ribonucleotide amidotransferase subunit II</fullName>
        <shortName evidence="1">FGAR amidotransferase II</shortName>
        <shortName evidence="1">FGAR-AT II</shortName>
    </alternativeName>
    <alternativeName>
        <fullName evidence="1">Glutamine amidotransferase PurL</fullName>
    </alternativeName>
    <alternativeName>
        <fullName evidence="1">Phosphoribosylformylglycinamidine synthase subunit II</fullName>
    </alternativeName>
</protein>
<feature type="chain" id="PRO_0000100455" description="Phosphoribosylformylglycinamidine synthase subunit PurL">
    <location>
        <begin position="1"/>
        <end position="742"/>
    </location>
</feature>
<feature type="active site" evidence="1">
    <location>
        <position position="54"/>
    </location>
</feature>
<feature type="active site" description="Proton acceptor" evidence="1">
    <location>
        <position position="100"/>
    </location>
</feature>
<feature type="binding site" evidence="1">
    <location>
        <position position="57"/>
    </location>
    <ligand>
        <name>ATP</name>
        <dbReference type="ChEBI" id="CHEBI:30616"/>
    </ligand>
</feature>
<feature type="binding site" evidence="1">
    <location>
        <position position="96"/>
    </location>
    <ligand>
        <name>ATP</name>
        <dbReference type="ChEBI" id="CHEBI:30616"/>
    </ligand>
</feature>
<feature type="binding site" evidence="1">
    <location>
        <position position="98"/>
    </location>
    <ligand>
        <name>Mg(2+)</name>
        <dbReference type="ChEBI" id="CHEBI:18420"/>
        <label>1</label>
    </ligand>
</feature>
<feature type="binding site" evidence="1">
    <location>
        <begin position="99"/>
        <end position="102"/>
    </location>
    <ligand>
        <name>substrate</name>
    </ligand>
</feature>
<feature type="binding site" evidence="1">
    <location>
        <position position="121"/>
    </location>
    <ligand>
        <name>substrate</name>
    </ligand>
</feature>
<feature type="binding site" evidence="1">
    <location>
        <position position="122"/>
    </location>
    <ligand>
        <name>Mg(2+)</name>
        <dbReference type="ChEBI" id="CHEBI:18420"/>
        <label>2</label>
    </ligand>
</feature>
<feature type="binding site" evidence="1">
    <location>
        <position position="245"/>
    </location>
    <ligand>
        <name>substrate</name>
    </ligand>
</feature>
<feature type="binding site" evidence="1">
    <location>
        <position position="273"/>
    </location>
    <ligand>
        <name>Mg(2+)</name>
        <dbReference type="ChEBI" id="CHEBI:18420"/>
        <label>2</label>
    </ligand>
</feature>
<feature type="binding site" evidence="1">
    <location>
        <begin position="317"/>
        <end position="319"/>
    </location>
    <ligand>
        <name>substrate</name>
    </ligand>
</feature>
<feature type="binding site" evidence="1">
    <location>
        <position position="500"/>
    </location>
    <ligand>
        <name>ATP</name>
        <dbReference type="ChEBI" id="CHEBI:30616"/>
    </ligand>
</feature>
<feature type="binding site" evidence="1">
    <location>
        <position position="537"/>
    </location>
    <ligand>
        <name>ATP</name>
        <dbReference type="ChEBI" id="CHEBI:30616"/>
    </ligand>
</feature>
<feature type="binding site" evidence="1">
    <location>
        <position position="538"/>
    </location>
    <ligand>
        <name>Mg(2+)</name>
        <dbReference type="ChEBI" id="CHEBI:18420"/>
        <label>1</label>
    </ligand>
</feature>
<feature type="binding site" evidence="1">
    <location>
        <position position="540"/>
    </location>
    <ligand>
        <name>substrate</name>
    </ligand>
</feature>
<name>PURL_GEOKA</name>
<reference key="1">
    <citation type="journal article" date="2004" name="Nucleic Acids Res.">
        <title>Thermoadaptation trait revealed by the genome sequence of thermophilic Geobacillus kaustophilus.</title>
        <authorList>
            <person name="Takami H."/>
            <person name="Takaki Y."/>
            <person name="Chee G.-J."/>
            <person name="Nishi S."/>
            <person name="Shimamura S."/>
            <person name="Suzuki H."/>
            <person name="Matsui S."/>
            <person name="Uchiyama I."/>
        </authorList>
    </citation>
    <scope>NUCLEOTIDE SEQUENCE [LARGE SCALE GENOMIC DNA]</scope>
    <source>
        <strain>HTA426</strain>
    </source>
</reference>
<accession>Q5L3D2</accession>
<dbReference type="EC" id="6.3.5.3" evidence="1"/>
<dbReference type="EMBL" id="BA000043">
    <property type="protein sequence ID" value="BAD74548.1"/>
    <property type="molecule type" value="Genomic_DNA"/>
</dbReference>
<dbReference type="RefSeq" id="WP_011229772.1">
    <property type="nucleotide sequence ID" value="NC_006510.1"/>
</dbReference>
<dbReference type="SMR" id="Q5L3D2"/>
<dbReference type="STRING" id="235909.GK0263"/>
<dbReference type="KEGG" id="gka:GK0263"/>
<dbReference type="eggNOG" id="COG0046">
    <property type="taxonomic scope" value="Bacteria"/>
</dbReference>
<dbReference type="HOGENOM" id="CLU_003100_0_1_9"/>
<dbReference type="UniPathway" id="UPA00074">
    <property type="reaction ID" value="UER00128"/>
</dbReference>
<dbReference type="Proteomes" id="UP000001172">
    <property type="component" value="Chromosome"/>
</dbReference>
<dbReference type="GO" id="GO:0005737">
    <property type="term" value="C:cytoplasm"/>
    <property type="evidence" value="ECO:0007669"/>
    <property type="project" value="UniProtKB-SubCell"/>
</dbReference>
<dbReference type="GO" id="GO:0005524">
    <property type="term" value="F:ATP binding"/>
    <property type="evidence" value="ECO:0007669"/>
    <property type="project" value="UniProtKB-UniRule"/>
</dbReference>
<dbReference type="GO" id="GO:0000287">
    <property type="term" value="F:magnesium ion binding"/>
    <property type="evidence" value="ECO:0007669"/>
    <property type="project" value="UniProtKB-UniRule"/>
</dbReference>
<dbReference type="GO" id="GO:0004642">
    <property type="term" value="F:phosphoribosylformylglycinamidine synthase activity"/>
    <property type="evidence" value="ECO:0007669"/>
    <property type="project" value="UniProtKB-UniRule"/>
</dbReference>
<dbReference type="GO" id="GO:0006189">
    <property type="term" value="P:'de novo' IMP biosynthetic process"/>
    <property type="evidence" value="ECO:0007669"/>
    <property type="project" value="UniProtKB-UniRule"/>
</dbReference>
<dbReference type="CDD" id="cd02203">
    <property type="entry name" value="PurL_repeat1"/>
    <property type="match status" value="1"/>
</dbReference>
<dbReference type="CDD" id="cd02204">
    <property type="entry name" value="PurL_repeat2"/>
    <property type="match status" value="1"/>
</dbReference>
<dbReference type="FunFam" id="3.30.1330.10:FF:000004">
    <property type="entry name" value="Phosphoribosylformylglycinamidine synthase subunit PurL"/>
    <property type="match status" value="1"/>
</dbReference>
<dbReference type="FunFam" id="3.90.650.10:FF:000009">
    <property type="entry name" value="Phosphoribosylformylglycinamidine synthase subunit PurL"/>
    <property type="match status" value="1"/>
</dbReference>
<dbReference type="Gene3D" id="3.90.650.10">
    <property type="entry name" value="PurM-like C-terminal domain"/>
    <property type="match status" value="2"/>
</dbReference>
<dbReference type="Gene3D" id="3.30.1330.10">
    <property type="entry name" value="PurM-like, N-terminal domain"/>
    <property type="match status" value="2"/>
</dbReference>
<dbReference type="HAMAP" id="MF_00420">
    <property type="entry name" value="PurL_2"/>
    <property type="match status" value="1"/>
</dbReference>
<dbReference type="InterPro" id="IPR010074">
    <property type="entry name" value="PRibForGlyAmidine_synth_PurL"/>
</dbReference>
<dbReference type="InterPro" id="IPR041609">
    <property type="entry name" value="PurL_linker"/>
</dbReference>
<dbReference type="InterPro" id="IPR010918">
    <property type="entry name" value="PurM-like_C_dom"/>
</dbReference>
<dbReference type="InterPro" id="IPR036676">
    <property type="entry name" value="PurM-like_C_sf"/>
</dbReference>
<dbReference type="InterPro" id="IPR016188">
    <property type="entry name" value="PurM-like_N"/>
</dbReference>
<dbReference type="InterPro" id="IPR036921">
    <property type="entry name" value="PurM-like_N_sf"/>
</dbReference>
<dbReference type="NCBIfam" id="TIGR01736">
    <property type="entry name" value="FGAM_synth_II"/>
    <property type="match status" value="1"/>
</dbReference>
<dbReference type="NCBIfam" id="NF002290">
    <property type="entry name" value="PRK01213.1"/>
    <property type="match status" value="1"/>
</dbReference>
<dbReference type="PANTHER" id="PTHR43555">
    <property type="entry name" value="PHOSPHORIBOSYLFORMYLGLYCINAMIDINE SYNTHASE SUBUNIT PURL"/>
    <property type="match status" value="1"/>
</dbReference>
<dbReference type="PANTHER" id="PTHR43555:SF1">
    <property type="entry name" value="PHOSPHORIBOSYLFORMYLGLYCINAMIDINE SYNTHASE SUBUNIT PURL"/>
    <property type="match status" value="1"/>
</dbReference>
<dbReference type="Pfam" id="PF00586">
    <property type="entry name" value="AIRS"/>
    <property type="match status" value="2"/>
</dbReference>
<dbReference type="Pfam" id="PF02769">
    <property type="entry name" value="AIRS_C"/>
    <property type="match status" value="2"/>
</dbReference>
<dbReference type="Pfam" id="PF18072">
    <property type="entry name" value="FGAR-AT_linker"/>
    <property type="match status" value="1"/>
</dbReference>
<dbReference type="PIRSF" id="PIRSF001587">
    <property type="entry name" value="FGAM_synthase_II"/>
    <property type="match status" value="1"/>
</dbReference>
<dbReference type="SUPFAM" id="SSF56042">
    <property type="entry name" value="PurM C-terminal domain-like"/>
    <property type="match status" value="2"/>
</dbReference>
<dbReference type="SUPFAM" id="SSF55326">
    <property type="entry name" value="PurM N-terminal domain-like"/>
    <property type="match status" value="2"/>
</dbReference>
<evidence type="ECO:0000255" key="1">
    <source>
        <dbReference type="HAMAP-Rule" id="MF_00420"/>
    </source>
</evidence>
<gene>
    <name evidence="1" type="primary">purL</name>
    <name type="ordered locus">GK0263</name>
</gene>
<keyword id="KW-0067">ATP-binding</keyword>
<keyword id="KW-0963">Cytoplasm</keyword>
<keyword id="KW-0436">Ligase</keyword>
<keyword id="KW-0460">Magnesium</keyword>
<keyword id="KW-0479">Metal-binding</keyword>
<keyword id="KW-0547">Nucleotide-binding</keyword>
<keyword id="KW-0658">Purine biosynthesis</keyword>
<keyword id="KW-1185">Reference proteome</keyword>
<sequence>MSLLLEPSAAMIKEQKLYREMGLTDEEFARIEAILGRLPNYTETGIFAVMWSEHCSYKNSKPVLKKFPTDGPHVLQGPGEGAGIVDIGDGLAVAFKIESHNHPSAIEPYQGAATGVGGIIRDVFSMGARPIALLNSLRFGELTSPRVKYLFEQVVAGIAGYGNCVGIPTVGGEVQFDPAYEGNPLVNAMCVGIIRHEDIQRGVATGVGNTVMYVGAKTGRDGIHGATFASEELSEQSEAKRPAVQVGDPFMEKLLLEACLEAVKSDALVGIQDMGAAGLTSSSAEMASKGGFGIEMNLDLVPQREAGMTPYEMMLSESQERMLLVVKQGCEDEIAAIFAKYGLEAKAIGKVTDDKMLRLLFRGEVAAEIPVDALAKDAPVYHKPSAEPAYYREFQAMPPYTPHIEDYNQTLLGLLAQPTIASKEWVYDQYDYMVRTNTVVAPGSDAAVVRIRGMNKALALTTDCNSRYLYLDPETGGKIAVAEAARNVICSGAKPLAITDCLNFGSPEKPEIFWQLEKAVDGMSEACRALGTPVVSGNVSLYNETNGEAVYPTPVVGMVGLIDDLSHITTQSFKQAGDLIYVIGEAKPEFGGSELQKWLEGRIFGKAPEIDLEVEASRQRQLLAAIRAGVVASAHDIAEGGLAVALAECVMGASGLGAKVTIGGDLVSELFSETQSRFVISVKKEHQEAFEQLVEAKRIGEVTGDGILTVNGEQGETVIRLSVDEMRNVWKGAIPCLLKSKD</sequence>